<gene>
    <name type="ordered locus">SACOL1399</name>
</gene>
<sequence>MPIVNVKLLEGRSDEQLKNLVSEVTDAVEKTTGANRQAIHVVIEEMKPNHYGVAGVRKSDQ</sequence>
<proteinExistence type="inferred from homology"/>
<comment type="similarity">
    <text evidence="2">Belongs to the 4-oxalocrotonate tautomerase family.</text>
</comment>
<evidence type="ECO:0000250" key="1"/>
<evidence type="ECO:0000305" key="2"/>
<dbReference type="EC" id="5.3.2.-"/>
<dbReference type="EMBL" id="CP000046">
    <property type="protein sequence ID" value="AAW36647.1"/>
    <property type="molecule type" value="Genomic_DNA"/>
</dbReference>
<dbReference type="RefSeq" id="WP_001123276.1">
    <property type="nucleotide sequence ID" value="NZ_JBGOFO010000003.1"/>
</dbReference>
<dbReference type="SMR" id="Q5HG56"/>
<dbReference type="KEGG" id="sac:SACOL1399"/>
<dbReference type="HOGENOM" id="CLU_148073_5_1_9"/>
<dbReference type="Proteomes" id="UP000000530">
    <property type="component" value="Chromosome"/>
</dbReference>
<dbReference type="GO" id="GO:0016853">
    <property type="term" value="F:isomerase activity"/>
    <property type="evidence" value="ECO:0007669"/>
    <property type="project" value="UniProtKB-KW"/>
</dbReference>
<dbReference type="CDD" id="cd00491">
    <property type="entry name" value="4Oxalocrotonate_Tautomerase"/>
    <property type="match status" value="1"/>
</dbReference>
<dbReference type="Gene3D" id="3.30.429.10">
    <property type="entry name" value="Macrophage Migration Inhibitory Factor"/>
    <property type="match status" value="1"/>
</dbReference>
<dbReference type="InterPro" id="IPR018191">
    <property type="entry name" value="4-OT"/>
</dbReference>
<dbReference type="InterPro" id="IPR004370">
    <property type="entry name" value="4-OT-like_dom"/>
</dbReference>
<dbReference type="InterPro" id="IPR014347">
    <property type="entry name" value="Tautomerase/MIF_sf"/>
</dbReference>
<dbReference type="NCBIfam" id="NF002571">
    <property type="entry name" value="PRK02220.1"/>
    <property type="match status" value="1"/>
</dbReference>
<dbReference type="NCBIfam" id="TIGR00013">
    <property type="entry name" value="taut"/>
    <property type="match status" value="1"/>
</dbReference>
<dbReference type="PANTHER" id="PTHR35530:SF1">
    <property type="entry name" value="2-HYDROXYMUCONATE TAUTOMERASE"/>
    <property type="match status" value="1"/>
</dbReference>
<dbReference type="PANTHER" id="PTHR35530">
    <property type="entry name" value="TAUTOMERASE-RELATED"/>
    <property type="match status" value="1"/>
</dbReference>
<dbReference type="Pfam" id="PF01361">
    <property type="entry name" value="Tautomerase"/>
    <property type="match status" value="1"/>
</dbReference>
<dbReference type="SUPFAM" id="SSF55331">
    <property type="entry name" value="Tautomerase/MIF"/>
    <property type="match status" value="1"/>
</dbReference>
<protein>
    <recommendedName>
        <fullName>Probable tautomerase SACOL1399</fullName>
        <ecNumber>5.3.2.-</ecNumber>
    </recommendedName>
</protein>
<accession>Q5HG56</accession>
<organism>
    <name type="scientific">Staphylococcus aureus (strain COL)</name>
    <dbReference type="NCBI Taxonomy" id="93062"/>
    <lineage>
        <taxon>Bacteria</taxon>
        <taxon>Bacillati</taxon>
        <taxon>Bacillota</taxon>
        <taxon>Bacilli</taxon>
        <taxon>Bacillales</taxon>
        <taxon>Staphylococcaceae</taxon>
        <taxon>Staphylococcus</taxon>
    </lineage>
</organism>
<feature type="initiator methionine" description="Removed" evidence="1">
    <location>
        <position position="1"/>
    </location>
</feature>
<feature type="chain" id="PRO_0000209540" description="Probable tautomerase SACOL1399">
    <location>
        <begin position="2"/>
        <end position="61"/>
    </location>
</feature>
<feature type="active site" description="Proton acceptor; via imino nitrogen" evidence="1">
    <location>
        <position position="2"/>
    </location>
</feature>
<name>Y1399_STAAC</name>
<reference key="1">
    <citation type="journal article" date="2005" name="J. Bacteriol.">
        <title>Insights on evolution of virulence and resistance from the complete genome analysis of an early methicillin-resistant Staphylococcus aureus strain and a biofilm-producing methicillin-resistant Staphylococcus epidermidis strain.</title>
        <authorList>
            <person name="Gill S.R."/>
            <person name="Fouts D.E."/>
            <person name="Archer G.L."/>
            <person name="Mongodin E.F."/>
            <person name="DeBoy R.T."/>
            <person name="Ravel J."/>
            <person name="Paulsen I.T."/>
            <person name="Kolonay J.F."/>
            <person name="Brinkac L.M."/>
            <person name="Beanan M.J."/>
            <person name="Dodson R.J."/>
            <person name="Daugherty S.C."/>
            <person name="Madupu R."/>
            <person name="Angiuoli S.V."/>
            <person name="Durkin A.S."/>
            <person name="Haft D.H."/>
            <person name="Vamathevan J.J."/>
            <person name="Khouri H."/>
            <person name="Utterback T.R."/>
            <person name="Lee C."/>
            <person name="Dimitrov G."/>
            <person name="Jiang L."/>
            <person name="Qin H."/>
            <person name="Weidman J."/>
            <person name="Tran K."/>
            <person name="Kang K.H."/>
            <person name="Hance I.R."/>
            <person name="Nelson K.E."/>
            <person name="Fraser C.M."/>
        </authorList>
    </citation>
    <scope>NUCLEOTIDE SEQUENCE [LARGE SCALE GENOMIC DNA]</scope>
    <source>
        <strain>COL</strain>
    </source>
</reference>
<keyword id="KW-0413">Isomerase</keyword>